<name>T150B_MOUSE</name>
<keyword id="KW-0025">Alternative splicing</keyword>
<keyword id="KW-0072">Autophagy</keyword>
<keyword id="KW-1003">Cell membrane</keyword>
<keyword id="KW-0968">Cytoplasmic vesicle</keyword>
<keyword id="KW-0967">Endosome</keyword>
<keyword id="KW-0325">Glycoprotein</keyword>
<keyword id="KW-0472">Membrane</keyword>
<keyword id="KW-1185">Reference proteome</keyword>
<keyword id="KW-0812">Transmembrane</keyword>
<keyword id="KW-1133">Transmembrane helix</keyword>
<reference key="1">
    <citation type="journal article" date="2005" name="Science">
        <title>The transcriptional landscape of the mammalian genome.</title>
        <authorList>
            <person name="Carninci P."/>
            <person name="Kasukawa T."/>
            <person name="Katayama S."/>
            <person name="Gough J."/>
            <person name="Frith M.C."/>
            <person name="Maeda N."/>
            <person name="Oyama R."/>
            <person name="Ravasi T."/>
            <person name="Lenhard B."/>
            <person name="Wells C."/>
            <person name="Kodzius R."/>
            <person name="Shimokawa K."/>
            <person name="Bajic V.B."/>
            <person name="Brenner S.E."/>
            <person name="Batalov S."/>
            <person name="Forrest A.R."/>
            <person name="Zavolan M."/>
            <person name="Davis M.J."/>
            <person name="Wilming L.G."/>
            <person name="Aidinis V."/>
            <person name="Allen J.E."/>
            <person name="Ambesi-Impiombato A."/>
            <person name="Apweiler R."/>
            <person name="Aturaliya R.N."/>
            <person name="Bailey T.L."/>
            <person name="Bansal M."/>
            <person name="Baxter L."/>
            <person name="Beisel K.W."/>
            <person name="Bersano T."/>
            <person name="Bono H."/>
            <person name="Chalk A.M."/>
            <person name="Chiu K.P."/>
            <person name="Choudhary V."/>
            <person name="Christoffels A."/>
            <person name="Clutterbuck D.R."/>
            <person name="Crowe M.L."/>
            <person name="Dalla E."/>
            <person name="Dalrymple B.P."/>
            <person name="de Bono B."/>
            <person name="Della Gatta G."/>
            <person name="di Bernardo D."/>
            <person name="Down T."/>
            <person name="Engstrom P."/>
            <person name="Fagiolini M."/>
            <person name="Faulkner G."/>
            <person name="Fletcher C.F."/>
            <person name="Fukushima T."/>
            <person name="Furuno M."/>
            <person name="Futaki S."/>
            <person name="Gariboldi M."/>
            <person name="Georgii-Hemming P."/>
            <person name="Gingeras T.R."/>
            <person name="Gojobori T."/>
            <person name="Green R.E."/>
            <person name="Gustincich S."/>
            <person name="Harbers M."/>
            <person name="Hayashi Y."/>
            <person name="Hensch T.K."/>
            <person name="Hirokawa N."/>
            <person name="Hill D."/>
            <person name="Huminiecki L."/>
            <person name="Iacono M."/>
            <person name="Ikeo K."/>
            <person name="Iwama A."/>
            <person name="Ishikawa T."/>
            <person name="Jakt M."/>
            <person name="Kanapin A."/>
            <person name="Katoh M."/>
            <person name="Kawasawa Y."/>
            <person name="Kelso J."/>
            <person name="Kitamura H."/>
            <person name="Kitano H."/>
            <person name="Kollias G."/>
            <person name="Krishnan S.P."/>
            <person name="Kruger A."/>
            <person name="Kummerfeld S.K."/>
            <person name="Kurochkin I.V."/>
            <person name="Lareau L.F."/>
            <person name="Lazarevic D."/>
            <person name="Lipovich L."/>
            <person name="Liu J."/>
            <person name="Liuni S."/>
            <person name="McWilliam S."/>
            <person name="Madan Babu M."/>
            <person name="Madera M."/>
            <person name="Marchionni L."/>
            <person name="Matsuda H."/>
            <person name="Matsuzawa S."/>
            <person name="Miki H."/>
            <person name="Mignone F."/>
            <person name="Miyake S."/>
            <person name="Morris K."/>
            <person name="Mottagui-Tabar S."/>
            <person name="Mulder N."/>
            <person name="Nakano N."/>
            <person name="Nakauchi H."/>
            <person name="Ng P."/>
            <person name="Nilsson R."/>
            <person name="Nishiguchi S."/>
            <person name="Nishikawa S."/>
            <person name="Nori F."/>
            <person name="Ohara O."/>
            <person name="Okazaki Y."/>
            <person name="Orlando V."/>
            <person name="Pang K.C."/>
            <person name="Pavan W.J."/>
            <person name="Pavesi G."/>
            <person name="Pesole G."/>
            <person name="Petrovsky N."/>
            <person name="Piazza S."/>
            <person name="Reed J."/>
            <person name="Reid J.F."/>
            <person name="Ring B.Z."/>
            <person name="Ringwald M."/>
            <person name="Rost B."/>
            <person name="Ruan Y."/>
            <person name="Salzberg S.L."/>
            <person name="Sandelin A."/>
            <person name="Schneider C."/>
            <person name="Schoenbach C."/>
            <person name="Sekiguchi K."/>
            <person name="Semple C.A."/>
            <person name="Seno S."/>
            <person name="Sessa L."/>
            <person name="Sheng Y."/>
            <person name="Shibata Y."/>
            <person name="Shimada H."/>
            <person name="Shimada K."/>
            <person name="Silva D."/>
            <person name="Sinclair B."/>
            <person name="Sperling S."/>
            <person name="Stupka E."/>
            <person name="Sugiura K."/>
            <person name="Sultana R."/>
            <person name="Takenaka Y."/>
            <person name="Taki K."/>
            <person name="Tammoja K."/>
            <person name="Tan S.L."/>
            <person name="Tang S."/>
            <person name="Taylor M.S."/>
            <person name="Tegner J."/>
            <person name="Teichmann S.A."/>
            <person name="Ueda H.R."/>
            <person name="van Nimwegen E."/>
            <person name="Verardo R."/>
            <person name="Wei C.L."/>
            <person name="Yagi K."/>
            <person name="Yamanishi H."/>
            <person name="Zabarovsky E."/>
            <person name="Zhu S."/>
            <person name="Zimmer A."/>
            <person name="Hide W."/>
            <person name="Bult C."/>
            <person name="Grimmond S.M."/>
            <person name="Teasdale R.D."/>
            <person name="Liu E.T."/>
            <person name="Brusic V."/>
            <person name="Quackenbush J."/>
            <person name="Wahlestedt C."/>
            <person name="Mattick J.S."/>
            <person name="Hume D.A."/>
            <person name="Kai C."/>
            <person name="Sasaki D."/>
            <person name="Tomaru Y."/>
            <person name="Fukuda S."/>
            <person name="Kanamori-Katayama M."/>
            <person name="Suzuki M."/>
            <person name="Aoki J."/>
            <person name="Arakawa T."/>
            <person name="Iida J."/>
            <person name="Imamura K."/>
            <person name="Itoh M."/>
            <person name="Kato T."/>
            <person name="Kawaji H."/>
            <person name="Kawagashira N."/>
            <person name="Kawashima T."/>
            <person name="Kojima M."/>
            <person name="Kondo S."/>
            <person name="Konno H."/>
            <person name="Nakano K."/>
            <person name="Ninomiya N."/>
            <person name="Nishio T."/>
            <person name="Okada M."/>
            <person name="Plessy C."/>
            <person name="Shibata K."/>
            <person name="Shiraki T."/>
            <person name="Suzuki S."/>
            <person name="Tagami M."/>
            <person name="Waki K."/>
            <person name="Watahiki A."/>
            <person name="Okamura-Oho Y."/>
            <person name="Suzuki H."/>
            <person name="Kawai J."/>
            <person name="Hayashizaki Y."/>
        </authorList>
    </citation>
    <scope>NUCLEOTIDE SEQUENCE [LARGE SCALE MRNA] (ISOFORM 2)</scope>
    <source>
        <strain>C57BL/6J</strain>
        <tissue>Thymus</tissue>
    </source>
</reference>
<reference key="2">
    <citation type="journal article" date="2004" name="Genome Res.">
        <title>The status, quality, and expansion of the NIH full-length cDNA project: the Mammalian Gene Collection (MGC).</title>
        <authorList>
            <consortium name="The MGC Project Team"/>
        </authorList>
    </citation>
    <scope>NUCLEOTIDE SEQUENCE [LARGE SCALE MRNA] (ISOFORM 1)</scope>
    <source>
        <strain>FVB/N</strain>
        <tissue>Colon</tissue>
    </source>
</reference>
<feature type="chain" id="PRO_0000349285" description="Modulator of macroautophagy TMEM150B">
    <location>
        <begin position="1"/>
        <end position="238"/>
    </location>
</feature>
<feature type="topological domain" description="Cytoplasmic" evidence="5">
    <location>
        <begin position="1"/>
        <end position="8"/>
    </location>
</feature>
<feature type="transmembrane region" description="Helical" evidence="3">
    <location>
        <begin position="9"/>
        <end position="29"/>
    </location>
</feature>
<feature type="topological domain" description="Extracellular" evidence="5">
    <location>
        <begin position="30"/>
        <end position="51"/>
    </location>
</feature>
<feature type="transmembrane region" description="Helical" evidence="3">
    <location>
        <begin position="52"/>
        <end position="72"/>
    </location>
</feature>
<feature type="topological domain" description="Cytoplasmic" evidence="5">
    <location>
        <begin position="73"/>
        <end position="86"/>
    </location>
</feature>
<feature type="transmembrane region" description="Helical" evidence="3">
    <location>
        <begin position="87"/>
        <end position="107"/>
    </location>
</feature>
<feature type="topological domain" description="Extracellular" evidence="5">
    <location>
        <begin position="108"/>
        <end position="116"/>
    </location>
</feature>
<feature type="transmembrane region" description="Helical" evidence="3">
    <location>
        <begin position="117"/>
        <end position="137"/>
    </location>
</feature>
<feature type="topological domain" description="Cytoplasmic" evidence="5">
    <location>
        <begin position="138"/>
        <end position="156"/>
    </location>
</feature>
<feature type="transmembrane region" description="Helical" evidence="3">
    <location>
        <begin position="157"/>
        <end position="177"/>
    </location>
</feature>
<feature type="topological domain" description="Extracellular" evidence="5">
    <location>
        <begin position="178"/>
        <end position="186"/>
    </location>
</feature>
<feature type="transmembrane region" description="Helical" evidence="3">
    <location>
        <begin position="187"/>
        <end position="207"/>
    </location>
</feature>
<feature type="topological domain" description="Cytoplasmic" evidence="2">
    <location>
        <begin position="208"/>
        <end position="238"/>
    </location>
</feature>
<feature type="glycosylation site" description="N-linked (GlcNAc...) asparagine" evidence="3">
    <location>
        <position position="30"/>
    </location>
</feature>
<feature type="splice variant" id="VSP_035310" description="In isoform 2." evidence="4">
    <original>DKNQKPTHLAGAFLA</original>
    <variation>RSPIPQSWSRETHRR</variation>
    <location>
        <begin position="109"/>
        <end position="123"/>
    </location>
</feature>
<feature type="splice variant" id="VSP_035311" description="In isoform 2." evidence="4">
    <location>
        <begin position="124"/>
        <end position="238"/>
    </location>
</feature>
<accession>Q8R218</accession>
<accession>Q8C9L9</accession>
<protein>
    <recommendedName>
        <fullName evidence="5">Modulator of macroautophagy TMEM150B</fullName>
    </recommendedName>
    <alternativeName>
        <fullName evidence="1">Transmembrane protein 150B</fullName>
    </alternativeName>
</protein>
<evidence type="ECO:0000250" key="1">
    <source>
        <dbReference type="UniProtKB" id="A6NC51"/>
    </source>
</evidence>
<evidence type="ECO:0000250" key="2">
    <source>
        <dbReference type="UniProtKB" id="Q86TG1"/>
    </source>
</evidence>
<evidence type="ECO:0000255" key="3"/>
<evidence type="ECO:0000303" key="4">
    <source>
    </source>
</evidence>
<evidence type="ECO:0000305" key="5"/>
<dbReference type="EMBL" id="AK041846">
    <property type="protein sequence ID" value="BAC31082.1"/>
    <property type="molecule type" value="mRNA"/>
</dbReference>
<dbReference type="EMBL" id="BC022651">
    <property type="protein sequence ID" value="AAH22651.1"/>
    <property type="molecule type" value="mRNA"/>
</dbReference>
<dbReference type="CCDS" id="CCDS20742.1">
    <molecule id="Q8R218-2"/>
</dbReference>
<dbReference type="CCDS" id="CCDS51975.1">
    <molecule id="Q8R218-1"/>
</dbReference>
<dbReference type="RefSeq" id="NP_001136264.1">
    <molecule id="Q8R218-1"/>
    <property type="nucleotide sequence ID" value="NM_001142792.1"/>
</dbReference>
<dbReference type="RefSeq" id="NP_808555.1">
    <molecule id="Q8R218-2"/>
    <property type="nucleotide sequence ID" value="NM_177887.4"/>
</dbReference>
<dbReference type="FunCoup" id="Q8R218">
    <property type="interactions" value="338"/>
</dbReference>
<dbReference type="STRING" id="10090.ENSMUSP00000083549"/>
<dbReference type="GlyCosmos" id="Q8R218">
    <property type="glycosylation" value="1 site, No reported glycans"/>
</dbReference>
<dbReference type="GlyGen" id="Q8R218">
    <property type="glycosylation" value="1 site"/>
</dbReference>
<dbReference type="PaxDb" id="10090-ENSMUSP00000083549"/>
<dbReference type="Antibodypedia" id="66997">
    <property type="antibodies" value="53 antibodies from 10 providers"/>
</dbReference>
<dbReference type="Ensembl" id="ENSMUST00000086363.5">
    <molecule id="Q8R218-1"/>
    <property type="protein sequence ID" value="ENSMUSP00000083549.5"/>
    <property type="gene ID" value="ENSMUSG00000046456.15"/>
</dbReference>
<dbReference type="Ensembl" id="ENSMUST00000086364.11">
    <molecule id="Q8R218-2"/>
    <property type="protein sequence ID" value="ENSMUSP00000083550.5"/>
    <property type="gene ID" value="ENSMUSG00000046456.15"/>
</dbReference>
<dbReference type="GeneID" id="330460"/>
<dbReference type="KEGG" id="mmu:330460"/>
<dbReference type="UCSC" id="uc009eyg.2">
    <molecule id="Q8R218-2"/>
    <property type="organism name" value="mouse"/>
</dbReference>
<dbReference type="UCSC" id="uc009eyh.2">
    <molecule id="Q8R218-1"/>
    <property type="organism name" value="mouse"/>
</dbReference>
<dbReference type="AGR" id="MGI:2679718"/>
<dbReference type="CTD" id="284417"/>
<dbReference type="MGI" id="MGI:2679718">
    <property type="gene designation" value="Tmem150b"/>
</dbReference>
<dbReference type="VEuPathDB" id="HostDB:ENSMUSG00000046456"/>
<dbReference type="eggNOG" id="KOG4320">
    <property type="taxonomic scope" value="Eukaryota"/>
</dbReference>
<dbReference type="GeneTree" id="ENSGT01030000234578"/>
<dbReference type="HOGENOM" id="CLU_059992_3_0_1"/>
<dbReference type="InParanoid" id="Q8R218"/>
<dbReference type="OMA" id="IRYHQLR"/>
<dbReference type="OrthoDB" id="191706at2759"/>
<dbReference type="PhylomeDB" id="Q8R218"/>
<dbReference type="TreeFam" id="TF314508"/>
<dbReference type="BioGRID-ORCS" id="330460">
    <property type="hits" value="1 hit in 78 CRISPR screens"/>
</dbReference>
<dbReference type="PRO" id="PR:Q8R218"/>
<dbReference type="Proteomes" id="UP000000589">
    <property type="component" value="Chromosome 7"/>
</dbReference>
<dbReference type="RNAct" id="Q8R218">
    <property type="molecule type" value="protein"/>
</dbReference>
<dbReference type="Bgee" id="ENSMUSG00000046456">
    <property type="expression patterns" value="Expressed in small intestine Peyer's patch and 42 other cell types or tissues"/>
</dbReference>
<dbReference type="GO" id="GO:0000421">
    <property type="term" value="C:autophagosome membrane"/>
    <property type="evidence" value="ECO:0007669"/>
    <property type="project" value="UniProtKB-SubCell"/>
</dbReference>
<dbReference type="GO" id="GO:0010008">
    <property type="term" value="C:endosome membrane"/>
    <property type="evidence" value="ECO:0007669"/>
    <property type="project" value="UniProtKB-SubCell"/>
</dbReference>
<dbReference type="GO" id="GO:0005886">
    <property type="term" value="C:plasma membrane"/>
    <property type="evidence" value="ECO:0000250"/>
    <property type="project" value="UniProtKB"/>
</dbReference>
<dbReference type="GO" id="GO:0006914">
    <property type="term" value="P:autophagy"/>
    <property type="evidence" value="ECO:0007669"/>
    <property type="project" value="UniProtKB-KW"/>
</dbReference>
<dbReference type="InterPro" id="IPR050911">
    <property type="entry name" value="DRAM/TMEM150_Autophagy_Mod"/>
</dbReference>
<dbReference type="InterPro" id="IPR019402">
    <property type="entry name" value="Frag1/DRAM/Sfk1"/>
</dbReference>
<dbReference type="PANTHER" id="PTHR21324">
    <property type="entry name" value="FASTING-INDUCIBLE INTEGRAL MEMBRANE PROTEIN TM6P1-RELATED"/>
    <property type="match status" value="1"/>
</dbReference>
<dbReference type="PANTHER" id="PTHR21324:SF3">
    <property type="entry name" value="MODULATOR OF MACROAUTOPHAGY TMEM150B"/>
    <property type="match status" value="1"/>
</dbReference>
<dbReference type="Pfam" id="PF10277">
    <property type="entry name" value="Frag1"/>
    <property type="match status" value="1"/>
</dbReference>
<comment type="function">
    <text evidence="1">Modulator of macroautophagy that causes accumulation of autophagosomes under basal conditions and enhances autophagic flux (By similarity). Represses cell death and promotes long-term clonogenic survival of cells grown in the absence of glucose in a macroautophagy-independent manner (By similarity). May have some role in extracellular matrix engulfment or growth factor receptor recycling, both of which can modulate cell survival (By similarity).</text>
</comment>
<comment type="subcellular location">
    <subcellularLocation>
        <location evidence="1">Cell membrane</location>
        <topology evidence="1">Multi-pass membrane protein</topology>
    </subcellularLocation>
    <subcellularLocation>
        <location evidence="1">Endosome membrane</location>
        <topology evidence="3">Multi-pass membrane protein</topology>
    </subcellularLocation>
    <subcellularLocation>
        <location evidence="1">Cytoplasmic vesicle</location>
        <location evidence="1">Autophagosome membrane</location>
        <topology evidence="3">Multi-pass membrane protein</topology>
    </subcellularLocation>
    <text evidence="1">Localizes mainly at the plasma membrane where it concentrates at actin-rich focal adhesions (By similarity).</text>
</comment>
<comment type="alternative products">
    <event type="alternative splicing"/>
    <isoform>
        <id>Q8R218-1</id>
        <name>1</name>
        <sequence type="displayed"/>
    </isoform>
    <isoform>
        <id>Q8R218-2</id>
        <name>2</name>
        <sequence type="described" ref="VSP_035310 VSP_035311"/>
    </isoform>
</comment>
<comment type="similarity">
    <text evidence="5">Belongs to the DRAM/TMEM150 family.</text>
</comment>
<sequence>MWNYLSLLPVILFLWAIAGIWIVFAIAVVNGSVDLNEGFPFISICGSYAPQSCIFGQVLNIGAALTVWICIVRHHQLRDWGVKTWQNQLILWSGILCALGTSIVGNFQDKNQKPTHLAGAFLAFILGNLYFWLQFFLSWWVKGLPQPGPHWIKSLRLSLCSLSTILIVAMIVLHALHMRSASAICEWVVAMLLFMLFGFFAVDFSILRGCTLHLHPRLDSSLPQAPSGSPNIQMAQVL</sequence>
<gene>
    <name evidence="1" type="primary">Tmem150b</name>
</gene>
<proteinExistence type="evidence at transcript level"/>
<organism>
    <name type="scientific">Mus musculus</name>
    <name type="common">Mouse</name>
    <dbReference type="NCBI Taxonomy" id="10090"/>
    <lineage>
        <taxon>Eukaryota</taxon>
        <taxon>Metazoa</taxon>
        <taxon>Chordata</taxon>
        <taxon>Craniata</taxon>
        <taxon>Vertebrata</taxon>
        <taxon>Euteleostomi</taxon>
        <taxon>Mammalia</taxon>
        <taxon>Eutheria</taxon>
        <taxon>Euarchontoglires</taxon>
        <taxon>Glires</taxon>
        <taxon>Rodentia</taxon>
        <taxon>Myomorpha</taxon>
        <taxon>Muroidea</taxon>
        <taxon>Muridae</taxon>
        <taxon>Murinae</taxon>
        <taxon>Mus</taxon>
        <taxon>Mus</taxon>
    </lineage>
</organism>